<keyword id="KW-0007">Acetylation</keyword>
<keyword id="KW-0090">Biological rhythms</keyword>
<keyword id="KW-0106">Calcium</keyword>
<keyword id="KW-0156">Chromatin regulator</keyword>
<keyword id="KW-0963">Cytoplasm</keyword>
<keyword id="KW-0378">Hydrolase</keyword>
<keyword id="KW-1017">Isopeptide bond</keyword>
<keyword id="KW-0479">Metal-binding</keyword>
<keyword id="KW-0539">Nucleus</keyword>
<keyword id="KW-0597">Phosphoprotein</keyword>
<keyword id="KW-1185">Reference proteome</keyword>
<keyword id="KW-0678">Repressor</keyword>
<keyword id="KW-0702">S-nitrosylation</keyword>
<keyword id="KW-0804">Transcription</keyword>
<keyword id="KW-0805">Transcription regulation</keyword>
<keyword id="KW-0832">Ubl conjugation</keyword>
<keyword id="KW-0862">Zinc</keyword>
<sequence>MAYSQGGGKKKVCYYYDGDIGNYYYGQGHPMKPHRIRMTHNLLLNYGLYRKMEIYRPHKATAEEMTKYHSDEYIKFLRSIRPDNMSEYSKQMQRFNVGEDCPVFDGLFEFCQLSTGGSVAGAVKLNRQQTDMAVNWAGGLHHAKKSEASGFCYVNDIVLAILELLKYHQRVLYIDIDIHHGDGVEEAFYTTDRVMTVSFHKYGEYFPGTGDLRDIGAGKGKYYAVNFPMRDGIDDESYGQIFKPIISKVMEMYQPSAVVLQCGADSLSGDRLGCFNLTVKGHAKCVEVAKTFNLPLLMLGGGGYTIRNVARCWTYETAVALDCEIPNELPYNDYFEYFGPDFKLHISPSNMTNQNTPEYMEKIKQRLFENLRMLPHAPGVQMQAIPEDAVHEDSGDEDGEDPDKRISIRASDKRIACDEEFSDSEDEGEGGRRNVADHKKGAKKARIEEDKKETEDKKTDVKEEDKSKDNSGEKTDPKGAKSEQLSNP</sequence>
<gene>
    <name evidence="30" type="primary">Hdac2</name>
    <name type="synonym">Yy1bp</name>
</gene>
<name>HDAC2_MOUSE</name>
<reference key="1">
    <citation type="journal article" date="1996" name="Proc. Natl. Acad. Sci. U.S.A.">
        <title>Transcriptional repression by YY1 is mediated by interaction with a mammalian homolog of the yeast global regulator RPD3.</title>
        <authorList>
            <person name="Yang W.-M."/>
            <person name="Inouye C.J."/>
            <person name="Zeng Y."/>
            <person name="Bearss D."/>
            <person name="Seto E."/>
        </authorList>
    </citation>
    <scope>NUCLEOTIDE SEQUENCE [MRNA]</scope>
    <source>
        <tissue>Lymphoma</tissue>
    </source>
</reference>
<reference key="2">
    <citation type="submission" date="2005-07" db="EMBL/GenBank/DDBJ databases">
        <authorList>
            <person name="Mural R.J."/>
            <person name="Adams M.D."/>
            <person name="Myers E.W."/>
            <person name="Smith H.O."/>
            <person name="Venter J.C."/>
        </authorList>
    </citation>
    <scope>NUCLEOTIDE SEQUENCE [LARGE SCALE GENOMIC DNA]</scope>
</reference>
<reference key="3">
    <citation type="journal article" date="2004" name="Genome Res.">
        <title>The status, quality, and expansion of the NIH full-length cDNA project: the Mammalian Gene Collection (MGC).</title>
        <authorList>
            <consortium name="The MGC Project Team"/>
        </authorList>
    </citation>
    <scope>NUCLEOTIDE SEQUENCE [LARGE SCALE MRNA]</scope>
    <source>
        <tissue>Brain</tissue>
    </source>
</reference>
<reference key="4">
    <citation type="journal article" date="1998" name="Mol. Cell">
        <title>SAP30, a component of the mSin3 corepressor complex involved in N-CoR-mediated repression by specific transcription factors.</title>
        <authorList>
            <person name="Laherty C.D."/>
            <person name="Billin A.N."/>
            <person name="Lavinsky R.M."/>
            <person name="Yochum G.S."/>
            <person name="Bush A.C."/>
            <person name="Sun J.-M."/>
            <person name="Mullen T.-M."/>
            <person name="Davie J.R."/>
            <person name="Rose D.W."/>
            <person name="Glass C.K."/>
            <person name="Rosenfeld M.G."/>
            <person name="Ayer D.E."/>
            <person name="Eisenman R.N."/>
        </authorList>
    </citation>
    <scope>INTERACTION WITH SAP30</scope>
</reference>
<reference key="5">
    <citation type="journal article" date="2000" name="Proc. Natl. Acad. Sci. U.S.A.">
        <title>Identification of a nuclear domain with deacetylase activity.</title>
        <authorList>
            <person name="Downes M."/>
            <person name="Ordentlich P."/>
            <person name="Kao H.-Y."/>
            <person name="Alvarez J.G.A."/>
            <person name="Evans R.M."/>
        </authorList>
    </citation>
    <scope>INTERACTION WITH HDAC7</scope>
</reference>
<reference key="6">
    <citation type="journal article" date="2001" name="Mol. Cell. Biol.">
        <title>ETO, a target of t(8;21) in acute leukemia, makes distinct contacts with multiple histone deacetylases and binds mSin3A through its oligomerization domain.</title>
        <authorList>
            <person name="Amann J.M."/>
            <person name="Nip J."/>
            <person name="Strom D.K."/>
            <person name="Lutterbach B."/>
            <person name="Harada H."/>
            <person name="Lenny N."/>
            <person name="Downing J.R."/>
            <person name="Meyers S."/>
            <person name="Hiebert S.W."/>
        </authorList>
    </citation>
    <scope>INTERACTION WITH CBFA2T3</scope>
</reference>
<reference key="7">
    <citation type="journal article" date="2002" name="Nucleic Acids Res.">
        <title>Functional and physical interaction between the histone methyl transferase Suv39H1 and histone deacetylases.</title>
        <authorList>
            <person name="Vaute O."/>
            <person name="Nicolas E."/>
            <person name="Vandel L."/>
            <person name="Trouche D."/>
        </authorList>
    </citation>
    <scope>INTERACTION WITH SUV39H1</scope>
</reference>
<reference key="8">
    <citation type="journal article" date="2003" name="Biochem. J.">
        <title>An ERG (ets-related gene)-associated histone methyltransferase interacts with histone deacetylases 1/2 and transcription co-repressors mSin3A/B.</title>
        <authorList>
            <person name="Yang L."/>
            <person name="Mei Q."/>
            <person name="Zielinska-Kwiatkowska A."/>
            <person name="Matsui Y."/>
            <person name="Blackburn M.L."/>
            <person name="Benedetti D."/>
            <person name="Krumm A.A."/>
            <person name="Taborsky G.J. Jr."/>
            <person name="Chansky H.A."/>
        </authorList>
    </citation>
    <scope>INTERACTION WITH SETDB1</scope>
</reference>
<reference key="9">
    <citation type="journal article" date="2004" name="Mol. Cell. Biol.">
        <title>Circadian and light-induced transcription of clock gene Per1 depends on histone acetylation and deacetylation.</title>
        <authorList>
            <person name="Naruse Y."/>
            <person name="Oh-hashi K."/>
            <person name="Iijima N."/>
            <person name="Naruse M."/>
            <person name="Yoshioka H."/>
            <person name="Tanaka M."/>
        </authorList>
    </citation>
    <scope>FUNCTION IN CIRCADIAN CLOCK</scope>
    <scope>INTERACTION WITH CRY1</scope>
</reference>
<reference key="10">
    <citation type="journal article" date="2005" name="Mol. Cell. Biol.">
        <title>Structural characterization of the histone variant macroH2A.</title>
        <authorList>
            <person name="Chakravarthy S."/>
            <person name="Gundimella S.K."/>
            <person name="Caron C."/>
            <person name="Perche P.-Y."/>
            <person name="Pehrson J.R."/>
            <person name="Khochbin S."/>
            <person name="Luger K."/>
        </authorList>
    </citation>
    <scope>INTERACTION WITH MACROH2A1</scope>
</reference>
<reference key="11">
    <citation type="journal article" date="2006" name="Mol. Cell. Biol.">
        <title>PRISM/PRDM6, a transcriptional repressor that promotes the proliferative gene program in smooth muscle cells.</title>
        <authorList>
            <person name="Davis C.A."/>
            <person name="Haberland M."/>
            <person name="Arnold M.A."/>
            <person name="Sutherland L.B."/>
            <person name="McDonald O.G."/>
            <person name="Richardson J.A."/>
            <person name="Childs G."/>
            <person name="Harris S."/>
            <person name="Owens G.K."/>
            <person name="Olson E.N."/>
        </authorList>
    </citation>
    <scope>INTERACTION WITH PRDM6</scope>
</reference>
<reference key="12">
    <citation type="journal article" date="2007" name="Mol. Cell">
        <title>Epigenetic regulation of hematopoietic differentiation by Gfi-1 and Gfi-1b is mediated by the cofactors CoREST and LSD1.</title>
        <authorList>
            <person name="Saleque S."/>
            <person name="Kim J."/>
            <person name="Rooke H.M."/>
            <person name="Orkin S.H."/>
        </authorList>
    </citation>
    <scope>IDENTIFICATION BY MASS SPECTROMETRY AS A COMPONENT OF A GFI-RCOR-KDM1A-HDAC COMPLEX</scope>
    <scope>INTERACTION WITH GFI1 AND GFI1B</scope>
    <scope>FUNCTION</scope>
</reference>
<reference key="13">
    <citation type="journal article" date="2007" name="Proc. Natl. Acad. Sci. U.S.A.">
        <title>Repression of Six3 by a corepressor regulates rhodopsin expression.</title>
        <authorList>
            <person name="Manavathi B."/>
            <person name="Peng S."/>
            <person name="Rayala S.K."/>
            <person name="Talukder A.H."/>
            <person name="Wang M.H."/>
            <person name="Wang R.A."/>
            <person name="Balasenthil S."/>
            <person name="Agarwal N."/>
            <person name="Frishman L.J."/>
            <person name="Kumar R."/>
        </authorList>
    </citation>
    <scope>INTERACTION WITH SIX3</scope>
</reference>
<reference key="14">
    <citation type="journal article" date="2007" name="Proc. Natl. Acad. Sci. U.S.A.">
        <title>Large-scale phosphorylation analysis of mouse liver.</title>
        <authorList>
            <person name="Villen J."/>
            <person name="Beausoleil S.A."/>
            <person name="Gerber S.A."/>
            <person name="Gygi S.P."/>
        </authorList>
    </citation>
    <scope>PHOSPHORYLATION [LARGE SCALE ANALYSIS] AT SER-394 AND SER-422</scope>
    <scope>IDENTIFICATION BY MASS SPECTROMETRY [LARGE SCALE ANALYSIS]</scope>
    <source>
        <tissue>Liver</tissue>
    </source>
</reference>
<reference key="15">
    <citation type="journal article" date="2008" name="Nature">
        <title>S-Nitrosylation of histone deacetylase 2 induces chromatin remodelling in neurons.</title>
        <authorList>
            <person name="Nott A."/>
            <person name="Watson P.M."/>
            <person name="Robinson J.D."/>
            <person name="Crepaldi L."/>
            <person name="Riccio A."/>
        </authorList>
    </citation>
    <scope>S-NITROSYLATION AT CYS-262 AND CYS-274</scope>
    <scope>FUNCTION</scope>
    <scope>CATALYTIC ACTIVITY</scope>
    <scope>MUTAGENESIS OF CYS-152; CYS-262 AND CYS-274</scope>
</reference>
<reference key="16">
    <citation type="journal article" date="2009" name="Immunity">
        <title>The phagosomal proteome in interferon-gamma-activated macrophages.</title>
        <authorList>
            <person name="Trost M."/>
            <person name="English L."/>
            <person name="Lemieux S."/>
            <person name="Courcelles M."/>
            <person name="Desjardins M."/>
            <person name="Thibault P."/>
        </authorList>
    </citation>
    <scope>PHOSPHORYLATION [LARGE SCALE ANALYSIS] AT SER-394</scope>
    <scope>IDENTIFICATION BY MASS SPECTROMETRY [LARGE SCALE ANALYSIS]</scope>
</reference>
<reference key="17">
    <citation type="journal article" date="2009" name="Mol. Cell. Proteomics">
        <title>Large scale localization of protein phosphorylation by use of electron capture dissociation mass spectrometry.</title>
        <authorList>
            <person name="Sweet S.M."/>
            <person name="Bailey C.M."/>
            <person name="Cunningham D.L."/>
            <person name="Heath J.K."/>
            <person name="Cooper H.J."/>
        </authorList>
    </citation>
    <scope>PHOSPHORYLATION [LARGE SCALE ANALYSIS] AT SER-394; SER-422 AND SER-424</scope>
    <scope>IDENTIFICATION BY MASS SPECTROMETRY [LARGE SCALE ANALYSIS]</scope>
    <source>
        <tissue>Embryonic fibroblast</tissue>
    </source>
</reference>
<reference key="18">
    <citation type="journal article" date="2010" name="Cell">
        <title>A tissue-specific atlas of mouse protein phosphorylation and expression.</title>
        <authorList>
            <person name="Huttlin E.L."/>
            <person name="Jedrychowski M.P."/>
            <person name="Elias J.E."/>
            <person name="Goswami T."/>
            <person name="Rad R."/>
            <person name="Beausoleil S.A."/>
            <person name="Villen J."/>
            <person name="Haas W."/>
            <person name="Sowa M.E."/>
            <person name="Gygi S.P."/>
        </authorList>
    </citation>
    <scope>PHOSPHORYLATION [LARGE SCALE ANALYSIS] AT SER-394 AND SER-422</scope>
    <scope>IDENTIFICATION BY MASS SPECTROMETRY [LARGE SCALE ANALYSIS]</scope>
    <source>
        <tissue>Brain</tissue>
        <tissue>Brown adipose tissue</tissue>
        <tissue>Heart</tissue>
        <tissue>Kidney</tissue>
        <tissue>Liver</tissue>
        <tissue>Lung</tissue>
        <tissue>Pancreas</tissue>
        <tissue>Spleen</tissue>
        <tissue>Testis</tissue>
    </source>
</reference>
<reference key="19">
    <citation type="journal article" date="2010" name="J. Biol. Chem.">
        <title>Revelation of p53-independent function of MTA1 in DNA damage response via modulation of the p21 WAF1-proliferating cell nuclear antigen pathway.</title>
        <authorList>
            <person name="Li D.Q."/>
            <person name="Pakala S.B."/>
            <person name="Reddy S.D."/>
            <person name="Ohshiro K."/>
            <person name="Peng S.H."/>
            <person name="Lian Y."/>
            <person name="Fu S.W."/>
            <person name="Kumar R."/>
        </authorList>
    </citation>
    <scope>FUNCTION</scope>
</reference>
<reference key="20">
    <citation type="journal article" date="2010" name="J. Biol. Chem.">
        <title>Regulation of NF-kappaB circuitry by a component of the nucleosome remodeling and deacetylase complex controls inflammatory response homeostasis.</title>
        <authorList>
            <person name="Pakala S.B."/>
            <person name="Bui-Nguyen T.M."/>
            <person name="Reddy S.D."/>
            <person name="Li D.Q."/>
            <person name="Peng S."/>
            <person name="Rayala S.K."/>
            <person name="Behringer R.R."/>
            <person name="Kumar R."/>
        </authorList>
    </citation>
    <scope>RETRACTED PAPER</scope>
</reference>
<reference key="21">
    <citation type="journal article" date="2017" name="J. Biol. Chem.">
        <authorList>
            <person name="Pakala S.B."/>
            <person name="Bui-Nguyen T.M."/>
            <person name="Reddy S.D."/>
            <person name="Li D.Q."/>
            <person name="Peng S."/>
            <person name="Rayala S.K."/>
            <person name="Behringer R.R."/>
            <person name="Kumar R."/>
        </authorList>
    </citation>
    <scope>CAUTION</scope>
    <scope>RETRACTION NOTICE OF PUBMED:20519513</scope>
</reference>
<reference key="22">
    <citation type="journal article" date="2010" name="Nat. Cell Biol.">
        <title>GAPDH mediates nitrosylation of nuclear proteins.</title>
        <authorList>
            <person name="Kornberg M.D."/>
            <person name="Sen N."/>
            <person name="Hara M.R."/>
            <person name="Juluri K.R."/>
            <person name="Nguyen J.V."/>
            <person name="Snowman A.M."/>
            <person name="Law L."/>
            <person name="Hester L.D."/>
            <person name="Snyder S.H."/>
        </authorList>
    </citation>
    <scope>S-NITROSYLATION BY GAPDH</scope>
</reference>
<reference key="23">
    <citation type="journal article" date="2011" name="J. Biol. Chem.">
        <title>A novel KRAB domain-containing zinc finger transcription factor ZNF431 directly represses Patched1 transcription.</title>
        <authorList>
            <person name="He Z."/>
            <person name="Cai J."/>
            <person name="Lim J.W."/>
            <person name="Kroll K."/>
            <person name="Ma L."/>
        </authorList>
    </citation>
    <scope>INTERACTION WITH ZNF431</scope>
</reference>
<reference key="24">
    <citation type="journal article" date="2012" name="Vitam. Horm.">
        <title>ZFP932 suppresses cellular Hedgehog response and Patched1 transcription.</title>
        <authorList>
            <person name="Huang G.J."/>
            <person name="He Z."/>
            <person name="Ma L."/>
        </authorList>
    </citation>
    <scope>INTERACTION WITH ZNF431</scope>
</reference>
<reference key="25">
    <citation type="journal article" date="2013" name="Development">
        <title>Insm1 controls development of pituitary endocrine cells and requires a SNAG domain for function and for recruitment of histone-modifying factors.</title>
        <authorList>
            <person name="Welcker J.E."/>
            <person name="Hernandez-Miranda L.R."/>
            <person name="Paul F.E."/>
            <person name="Jia S."/>
            <person name="Ivanov A."/>
            <person name="Selbach M."/>
            <person name="Birchmeier C."/>
        </authorList>
    </citation>
    <scope>INTERACTION WITH INSM1</scope>
</reference>
<reference key="26">
    <citation type="journal article" date="2016" name="Cell Rep.">
        <title>A Functional Switch of NuRD Chromatin Remodeling Complex Subunits Regulates Mouse Cortical Development.</title>
        <authorList>
            <person name="Nitarska J."/>
            <person name="Smith J.G."/>
            <person name="Sherlock W.T."/>
            <person name="Hillege M.M."/>
            <person name="Nott A."/>
            <person name="Barshop W.D."/>
            <person name="Vashisht A.A."/>
            <person name="Wohlschlegel J.A."/>
            <person name="Mitter R."/>
            <person name="Riccio A."/>
        </authorList>
    </citation>
    <scope>IDENTIFICATION IN THE NURD COMPLEX</scope>
    <scope>INTERACTION WITH CHD4 AND CHD5</scope>
    <scope>IDENTIFICATION BY MASS SPECTROMETRY</scope>
</reference>
<reference key="27">
    <citation type="journal article" date="2021" name="Adv. Sci.">
        <title>PWWP2B Fine-Tunes Adipose Thermogenesis by Stabilizing HDACs in a NuRD Subcomplex.</title>
        <authorList>
            <person name="Yan L."/>
            <person name="Jin W."/>
            <person name="Zhao Q."/>
            <person name="Cui X."/>
            <person name="Shi T."/>
            <person name="Xu Y."/>
            <person name="Li F."/>
            <person name="Jin W."/>
            <person name="Zhang Z."/>
            <person name="Zhang Z."/>
            <person name="Tang Q.Q."/>
            <person name="Pan D."/>
        </authorList>
    </citation>
    <scope>INTERACTION WITH PWWP2B</scope>
</reference>
<reference key="28">
    <citation type="journal article" date="2018" name="Sci. Rep.">
        <title>Histone deacetylase (HDAC) 1 and 2 complexes regulate both histone acetylation and crotonylation in vivo.</title>
        <authorList>
            <person name="Kelly R.D.W."/>
            <person name="Chandru A."/>
            <person name="Watson P.J."/>
            <person name="Song Y."/>
            <person name="Blades M."/>
            <person name="Robertson N.S."/>
            <person name="Jamieson A.G."/>
            <person name="Schwabe J.W.R."/>
            <person name="Cowley S.M."/>
        </authorList>
    </citation>
    <scope>FUNCTION</scope>
    <scope>CATALYTIC ACTIVITY</scope>
</reference>
<reference key="29">
    <citation type="journal article" date="2021" name="Nat. Commun.">
        <title>Meiosis-specific ZFP541 repressor complex promotes developmental progression of meiotic prophase towards completion during mouse spermatogenesis.</title>
        <authorList>
            <person name="Horisawa-Takada Y."/>
            <person name="Kodera C."/>
            <person name="Takemoto K."/>
            <person name="Sakashita A."/>
            <person name="Horisawa K."/>
            <person name="Maeda R."/>
            <person name="Shimada R."/>
            <person name="Usuki S."/>
            <person name="Fujimura S."/>
            <person name="Tani N."/>
            <person name="Matsuura K."/>
            <person name="Akiyama T."/>
            <person name="Suzuki A."/>
            <person name="Niwa H."/>
            <person name="Tachibana M."/>
            <person name="Ohba T."/>
            <person name="Katabuchi H."/>
            <person name="Namekawa S.H."/>
            <person name="Araki K."/>
            <person name="Ishiguro K.I."/>
        </authorList>
    </citation>
    <scope>IDENTIFICATION IN A COMPLEX WITH HDAC1; KCTD19; DNTTIP1 AND ZNF541</scope>
</reference>
<reference key="30">
    <citation type="journal article" date="2022" name="J. Genet. Genomics">
        <title>The ZFP541-KCTD19 complex is essential for pachytene progression by activating meiotic genes during mouse spermatogenesis.</title>
        <authorList>
            <person name="Li Y."/>
            <person name="Meng R."/>
            <person name="Li S."/>
            <person name="Gu B."/>
            <person name="Xu X."/>
            <person name="Zhang H."/>
            <person name="Tan X."/>
            <person name="Shao T."/>
            <person name="Wang J."/>
            <person name="Xu D."/>
            <person name="Wang F."/>
        </authorList>
    </citation>
    <scope>IDENTIFICATION IN A COMPLEX WITH HDAC1; KCTD19; DNTTIP1 AND ZNF541</scope>
</reference>
<organism>
    <name type="scientific">Mus musculus</name>
    <name type="common">Mouse</name>
    <dbReference type="NCBI Taxonomy" id="10090"/>
    <lineage>
        <taxon>Eukaryota</taxon>
        <taxon>Metazoa</taxon>
        <taxon>Chordata</taxon>
        <taxon>Craniata</taxon>
        <taxon>Vertebrata</taxon>
        <taxon>Euteleostomi</taxon>
        <taxon>Mammalia</taxon>
        <taxon>Eutheria</taxon>
        <taxon>Euarchontoglires</taxon>
        <taxon>Glires</taxon>
        <taxon>Rodentia</taxon>
        <taxon>Myomorpha</taxon>
        <taxon>Muroidea</taxon>
        <taxon>Muridae</taxon>
        <taxon>Murinae</taxon>
        <taxon>Mus</taxon>
        <taxon>Mus</taxon>
    </lineage>
</organism>
<protein>
    <recommendedName>
        <fullName evidence="27">Histone deacetylase 2</fullName>
        <shortName>HD2</shortName>
        <ecNumber evidence="14 29">3.5.1.98</ecNumber>
    </recommendedName>
    <alternativeName>
        <fullName evidence="27">Protein deacylase HDAC2</fullName>
        <ecNumber evidence="22">3.5.1.-</ecNumber>
    </alternativeName>
    <alternativeName>
        <fullName>YY1 transcription factor-binding protein</fullName>
    </alternativeName>
</protein>
<proteinExistence type="evidence at protein level"/>
<feature type="chain" id="PRO_0000114694" description="Histone deacetylase 2">
    <location>
        <begin position="1"/>
        <end position="488"/>
    </location>
</feature>
<feature type="region of interest" description="Histone deacetylase">
    <location>
        <begin position="9"/>
        <end position="322"/>
    </location>
</feature>
<feature type="region of interest" description="Disordered" evidence="4">
    <location>
        <begin position="389"/>
        <end position="488"/>
    </location>
</feature>
<feature type="compositionally biased region" description="Basic and acidic residues" evidence="4">
    <location>
        <begin position="402"/>
        <end position="417"/>
    </location>
</feature>
<feature type="compositionally biased region" description="Acidic residues" evidence="4">
    <location>
        <begin position="418"/>
        <end position="428"/>
    </location>
</feature>
<feature type="compositionally biased region" description="Basic and acidic residues" evidence="4">
    <location>
        <begin position="429"/>
        <end position="481"/>
    </location>
</feature>
<feature type="active site" evidence="2">
    <location>
        <position position="142"/>
    </location>
</feature>
<feature type="binding site" evidence="1">
    <location>
        <position position="28"/>
    </location>
    <ligand>
        <name>1D-myo-inositol 1,4,5,6-tetrakisphosphate</name>
        <dbReference type="ChEBI" id="CHEBI:57627"/>
    </ligand>
</feature>
<feature type="binding site" evidence="1">
    <location>
        <position position="32"/>
    </location>
    <ligand>
        <name>1D-myo-inositol 1,4,5,6-tetrakisphosphate</name>
        <dbReference type="ChEBI" id="CHEBI:57627"/>
    </ligand>
</feature>
<feature type="binding site" evidence="3">
    <location>
        <position position="175"/>
    </location>
    <ligand>
        <name>Ca(2+)</name>
        <dbReference type="ChEBI" id="CHEBI:29108"/>
        <label>1</label>
    </ligand>
</feature>
<feature type="binding site" evidence="3">
    <location>
        <position position="177"/>
    </location>
    <ligand>
        <name>Ca(2+)</name>
        <dbReference type="ChEBI" id="CHEBI:29108"/>
        <label>1</label>
    </ligand>
</feature>
<feature type="binding site" evidence="3">
    <location>
        <position position="177"/>
    </location>
    <ligand>
        <name>Zn(2+)</name>
        <dbReference type="ChEBI" id="CHEBI:29105"/>
    </ligand>
</feature>
<feature type="binding site" evidence="3">
    <location>
        <position position="179"/>
    </location>
    <ligand>
        <name>Ca(2+)</name>
        <dbReference type="ChEBI" id="CHEBI:29108"/>
        <label>1</label>
    </ligand>
</feature>
<feature type="binding site" evidence="3">
    <location>
        <position position="179"/>
    </location>
    <ligand>
        <name>Zn(2+)</name>
        <dbReference type="ChEBI" id="CHEBI:29105"/>
    </ligand>
</feature>
<feature type="binding site" evidence="3">
    <location>
        <position position="188"/>
    </location>
    <ligand>
        <name>Ca(2+)</name>
        <dbReference type="ChEBI" id="CHEBI:29108"/>
        <label>2</label>
    </ligand>
</feature>
<feature type="binding site" evidence="3">
    <location>
        <position position="191"/>
    </location>
    <ligand>
        <name>Ca(2+)</name>
        <dbReference type="ChEBI" id="CHEBI:29108"/>
        <label>2</label>
    </ligand>
</feature>
<feature type="binding site" evidence="3">
    <location>
        <position position="194"/>
    </location>
    <ligand>
        <name>Ca(2+)</name>
        <dbReference type="ChEBI" id="CHEBI:29108"/>
        <label>2</label>
    </ligand>
</feature>
<feature type="binding site" evidence="3">
    <location>
        <position position="198"/>
    </location>
    <ligand>
        <name>Ca(2+)</name>
        <dbReference type="ChEBI" id="CHEBI:29108"/>
        <label>1</label>
    </ligand>
</feature>
<feature type="binding site" evidence="3">
    <location>
        <position position="199"/>
    </location>
    <ligand>
        <name>Ca(2+)</name>
        <dbReference type="ChEBI" id="CHEBI:29108"/>
        <label>1</label>
    </ligand>
</feature>
<feature type="binding site" evidence="3">
    <location>
        <position position="223"/>
    </location>
    <ligand>
        <name>Ca(2+)</name>
        <dbReference type="ChEBI" id="CHEBI:29108"/>
        <label>2</label>
    </ligand>
</feature>
<feature type="binding site" evidence="3">
    <location>
        <position position="265"/>
    </location>
    <ligand>
        <name>Zn(2+)</name>
        <dbReference type="ChEBI" id="CHEBI:29105"/>
    </ligand>
</feature>
<feature type="binding site" evidence="1">
    <location>
        <position position="271"/>
    </location>
    <ligand>
        <name>1D-myo-inositol 1,4,5,6-tetrakisphosphate</name>
        <dbReference type="ChEBI" id="CHEBI:57627"/>
    </ligand>
</feature>
<feature type="modified residue" description="N6-acetyllysine; alternate" evidence="2">
    <location>
        <position position="75"/>
    </location>
</feature>
<feature type="modified residue" description="N6-acetyllysine" evidence="2">
    <location>
        <position position="221"/>
    </location>
</feature>
<feature type="modified residue" description="S-nitrosocysteine" evidence="14">
    <location>
        <position position="262"/>
    </location>
</feature>
<feature type="modified residue" description="S-nitrosocysteine" evidence="14">
    <location>
        <position position="274"/>
    </location>
</feature>
<feature type="modified residue" description="Phosphoserine" evidence="31 32 33 34">
    <location>
        <position position="394"/>
    </location>
</feature>
<feature type="modified residue" description="Phosphoserine" evidence="3">
    <location>
        <position position="407"/>
    </location>
</feature>
<feature type="modified residue" description="Phosphoserine" evidence="31 32 34">
    <location>
        <position position="422"/>
    </location>
</feature>
<feature type="modified residue" description="Phosphoserine" evidence="32">
    <location>
        <position position="424"/>
    </location>
</feature>
<feature type="cross-link" description="Glycyl lysine isopeptide (Lys-Gly) (interchain with G-Cter in SUMO2); alternate" evidence="3">
    <location>
        <position position="75"/>
    </location>
</feature>
<feature type="cross-link" description="Glycyl lysine isopeptide (Lys-Gly) (interchain with G-Cter in SUMO2)" evidence="2">
    <location>
        <position position="439"/>
    </location>
</feature>
<feature type="cross-link" description="Glycyl lysine isopeptide (Lys-Gly) (interchain with G-Cter in SUMO2)" evidence="3">
    <location>
        <position position="452"/>
    </location>
</feature>
<feature type="cross-link" description="Glycyl lysine isopeptide (Lys-Gly) (interchain with G-Cter in SUMO2)" evidence="3">
    <location>
        <position position="458"/>
    </location>
</feature>
<feature type="cross-link" description="Glycyl lysine isopeptide (Lys-Gly) (interchain with G-Cter in SUMO2)" evidence="3">
    <location>
        <position position="462"/>
    </location>
</feature>
<feature type="cross-link" description="Glycyl lysine isopeptide (Lys-Gly) (interchain with G-Cter in SUMO2)" evidence="3">
    <location>
        <position position="478"/>
    </location>
</feature>
<feature type="cross-link" description="Glycyl lysine isopeptide (Lys-Gly) (interchain with G-Cter in SUMO2)" evidence="2">
    <location>
        <position position="481"/>
    </location>
</feature>
<feature type="mutagenesis site" description="Does not affect S-nitrosylation." evidence="14">
    <original>C</original>
    <variation>A</variation>
    <location>
        <position position="152"/>
    </location>
</feature>
<feature type="mutagenesis site" description="Impairs S-nitrosylation. Abolishes S-nitrosylation; when associated with A-274." evidence="14">
    <original>C</original>
    <variation>A</variation>
    <location>
        <position position="262"/>
    </location>
</feature>
<feature type="mutagenesis site" description="Impairs S-nitrosylation. Abolishes S-nitrosylation; when associated with A-262." evidence="14">
    <original>C</original>
    <variation>A</variation>
    <location>
        <position position="274"/>
    </location>
</feature>
<feature type="sequence conflict" description="In Ref. 2; EDL04897." evidence="27" ref="2">
    <original>A</original>
    <variation>V</variation>
    <location>
        <position position="289"/>
    </location>
</feature>
<accession>P70288</accession>
<accession>B2RRP3</accession>
<evidence type="ECO:0000250" key="1">
    <source>
        <dbReference type="UniProtKB" id="O15379"/>
    </source>
</evidence>
<evidence type="ECO:0000250" key="2">
    <source>
        <dbReference type="UniProtKB" id="Q13547"/>
    </source>
</evidence>
<evidence type="ECO:0000250" key="3">
    <source>
        <dbReference type="UniProtKB" id="Q92769"/>
    </source>
</evidence>
<evidence type="ECO:0000256" key="4">
    <source>
        <dbReference type="SAM" id="MobiDB-lite"/>
    </source>
</evidence>
<evidence type="ECO:0000269" key="5">
    <source>
    </source>
</evidence>
<evidence type="ECO:0000269" key="6">
    <source>
    </source>
</evidence>
<evidence type="ECO:0000269" key="7">
    <source>
    </source>
</evidence>
<evidence type="ECO:0000269" key="8">
    <source>
    </source>
</evidence>
<evidence type="ECO:0000269" key="9">
    <source>
    </source>
</evidence>
<evidence type="ECO:0000269" key="10">
    <source>
    </source>
</evidence>
<evidence type="ECO:0000269" key="11">
    <source>
    </source>
</evidence>
<evidence type="ECO:0000269" key="12">
    <source>
    </source>
</evidence>
<evidence type="ECO:0000269" key="13">
    <source>
    </source>
</evidence>
<evidence type="ECO:0000269" key="14">
    <source>
    </source>
</evidence>
<evidence type="ECO:0000269" key="15">
    <source>
    </source>
</evidence>
<evidence type="ECO:0000269" key="16">
    <source>
    </source>
</evidence>
<evidence type="ECO:0000269" key="17">
    <source>
    </source>
</evidence>
<evidence type="ECO:0000269" key="18">
    <source>
    </source>
</evidence>
<evidence type="ECO:0000269" key="19">
    <source>
    </source>
</evidence>
<evidence type="ECO:0000269" key="20">
    <source>
    </source>
</evidence>
<evidence type="ECO:0000269" key="21">
    <source>
    </source>
</evidence>
<evidence type="ECO:0000269" key="22">
    <source>
    </source>
</evidence>
<evidence type="ECO:0000269" key="23">
    <source>
    </source>
</evidence>
<evidence type="ECO:0000269" key="24">
    <source>
    </source>
</evidence>
<evidence type="ECO:0000269" key="25">
    <source>
    </source>
</evidence>
<evidence type="ECO:0000269" key="26">
    <source>
    </source>
</evidence>
<evidence type="ECO:0000305" key="27"/>
<evidence type="ECO:0000305" key="28">
    <source>
    </source>
</evidence>
<evidence type="ECO:0000305" key="29">
    <source>
    </source>
</evidence>
<evidence type="ECO:0000312" key="30">
    <source>
        <dbReference type="MGI" id="MGI:1097691"/>
    </source>
</evidence>
<evidence type="ECO:0007744" key="31">
    <source>
    </source>
</evidence>
<evidence type="ECO:0007744" key="32">
    <source>
    </source>
</evidence>
<evidence type="ECO:0007744" key="33">
    <source>
    </source>
</evidence>
<evidence type="ECO:0007744" key="34">
    <source>
    </source>
</evidence>
<comment type="function">
    <text evidence="3 9 13 14 15 22">Histone deacetylase that catalyzes the deacetylation of lysine residues on the N-terminal part of the core histones (H2A, H2B, H3 and H4) (PubMed:18754010). Histone deacetylation gives a tag for epigenetic repression and plays an important role in transcriptional regulation, cell cycle progression and developmental events (PubMed:18754010). Histone deacetylases act via the formation of large multiprotein complexes (PubMed:18754010). Forms transcriptional repressor complexes by associating with MAD, SIN3, YY1 and N-COR (By similarity). Component of a RCOR/GFI/KDM1A/HDAC complex that suppresses, via histone deacetylase (HDAC) recruitment, a number of genes implicated in multilineage blood cell development (PubMed:17707228). Acts as a component of the histone deacetylase NuRD complex which participates in the remodeling of chromatin (By similarity). Component of the SIN3B complex that represses transcription and counteracts the histone acetyltransferase activity of EP300 through the recognition H3K27ac marks by PHF12 and the activity of the histone deacetylase HDAC2 (By similarity). Also deacetylates non-histone targets: deacetylates TSHZ3, thereby regulating its transcriptional repressor activity (By similarity). May be involved in the transcriptional repression of circadian target genes, such as PER1, mediated by CRY1 through histone deacetylation (PubMed:15226430). Involved in MTA1-mediated transcriptional corepression of TFF1 and CDKN1A (PubMed:20071335). In addition to protein deacetylase activity, also acts as a protein-lysine deacylase by recognizing other acyl groups: catalyzes removal of (2E)-butenoyl (crotonyl), lactoyl (lactyl) and 2-hydroxyisobutanoyl (2-hydroxyisobutyryl) acyl groups from lysine residues, leading to protein decrotonylation, delactylation and de-2-hydroxyisobutyrylation, respectively (PubMed:30279482).</text>
</comment>
<comment type="catalytic activity">
    <reaction evidence="14 29">
        <text>N(6)-acetyl-L-lysyl-[histone] + H2O = L-lysyl-[histone] + acetate</text>
        <dbReference type="Rhea" id="RHEA:58196"/>
        <dbReference type="Rhea" id="RHEA-COMP:9845"/>
        <dbReference type="Rhea" id="RHEA-COMP:11338"/>
        <dbReference type="ChEBI" id="CHEBI:15377"/>
        <dbReference type="ChEBI" id="CHEBI:29969"/>
        <dbReference type="ChEBI" id="CHEBI:30089"/>
        <dbReference type="ChEBI" id="CHEBI:61930"/>
        <dbReference type="EC" id="3.5.1.98"/>
    </reaction>
    <physiologicalReaction direction="left-to-right" evidence="14 29">
        <dbReference type="Rhea" id="RHEA:58197"/>
    </physiologicalReaction>
</comment>
<comment type="catalytic activity">
    <reaction evidence="3">
        <text>N(6)-acetyl-L-lysyl-[protein] + H2O = L-lysyl-[protein] + acetate</text>
        <dbReference type="Rhea" id="RHEA:58108"/>
        <dbReference type="Rhea" id="RHEA-COMP:9752"/>
        <dbReference type="Rhea" id="RHEA-COMP:10731"/>
        <dbReference type="ChEBI" id="CHEBI:15377"/>
        <dbReference type="ChEBI" id="CHEBI:29969"/>
        <dbReference type="ChEBI" id="CHEBI:30089"/>
        <dbReference type="ChEBI" id="CHEBI:61930"/>
    </reaction>
    <physiologicalReaction direction="left-to-right" evidence="3">
        <dbReference type="Rhea" id="RHEA:58109"/>
    </physiologicalReaction>
</comment>
<comment type="catalytic activity">
    <reaction evidence="22">
        <text>N(6)-(2E)-butenoyl-L-lysyl-[protein] + H2O = (2E)-2-butenoate + L-lysyl-[protein]</text>
        <dbReference type="Rhea" id="RHEA:69172"/>
        <dbReference type="Rhea" id="RHEA-COMP:9752"/>
        <dbReference type="Rhea" id="RHEA-COMP:13707"/>
        <dbReference type="ChEBI" id="CHEBI:15377"/>
        <dbReference type="ChEBI" id="CHEBI:29969"/>
        <dbReference type="ChEBI" id="CHEBI:35899"/>
        <dbReference type="ChEBI" id="CHEBI:137954"/>
    </reaction>
    <physiologicalReaction direction="left-to-right" evidence="22">
        <dbReference type="Rhea" id="RHEA:69173"/>
    </physiologicalReaction>
</comment>
<comment type="catalytic activity">
    <reaction evidence="3">
        <text>N(6)-(2-hydroxyisobutanoyl)-L-lysyl-[protein] + H2O = 2-hydroxy-2-methylpropanoate + L-lysyl-[protein]</text>
        <dbReference type="Rhea" id="RHEA:69176"/>
        <dbReference type="Rhea" id="RHEA-COMP:9752"/>
        <dbReference type="Rhea" id="RHEA-COMP:15921"/>
        <dbReference type="ChEBI" id="CHEBI:15377"/>
        <dbReference type="ChEBI" id="CHEBI:19641"/>
        <dbReference type="ChEBI" id="CHEBI:29969"/>
        <dbReference type="ChEBI" id="CHEBI:144968"/>
    </reaction>
    <physiologicalReaction direction="left-to-right" evidence="3">
        <dbReference type="Rhea" id="RHEA:69177"/>
    </physiologicalReaction>
</comment>
<comment type="catalytic activity">
    <reaction evidence="3">
        <text>N(6)-[(S)-lactoyl]-L-lysyl-[protein] + H2O = (S)-lactate + L-lysyl-[protein]</text>
        <dbReference type="Rhea" id="RHEA:81387"/>
        <dbReference type="Rhea" id="RHEA-COMP:9752"/>
        <dbReference type="Rhea" id="RHEA-COMP:19466"/>
        <dbReference type="ChEBI" id="CHEBI:15377"/>
        <dbReference type="ChEBI" id="CHEBI:16651"/>
        <dbReference type="ChEBI" id="CHEBI:29969"/>
        <dbReference type="ChEBI" id="CHEBI:231527"/>
    </reaction>
    <physiologicalReaction direction="left-to-right" evidence="3">
        <dbReference type="Rhea" id="RHEA:81388"/>
    </physiologicalReaction>
</comment>
<comment type="cofactor">
    <cofactor evidence="3">
        <name>Zn(2+)</name>
        <dbReference type="ChEBI" id="CHEBI:29105"/>
    </cofactor>
</comment>
<comment type="cofactor">
    <cofactor evidence="3">
        <name>Ca(2+)</name>
        <dbReference type="ChEBI" id="CHEBI:29108"/>
    </cofactor>
    <text evidence="3">Binds 2 Ca(2+) ions per subunit.</text>
</comment>
<comment type="activity regulation">
    <text evidence="1">Inositol tetraphosphate (1D-myo-inositol 1,4,5,6-tetrakisphosphate) may act as an intermolecular glue between HDAC2 and N-Cor repressor complex components.</text>
</comment>
<comment type="subunit">
    <text evidence="3 5 6 7 8 9 10 11 12 13 18 19 20 21 23 24 25 26">Part of the core histone deacetylase (HDAC) complex composed of HDAC1, HDAC2, RBBP4 and RBBP7, the core complex associates with SIN3, SAP18 and SAP30 to form the SIN3 HDAC complex (By similarity). Component of the nucleosome remodeling and deacetylase (NuRD) repressor complex, composed of core proteins MTA1, MTA2, MTA3, RBBP4, RBBP7, HDAC1, HDAC2, MBD2, MBD3, and peripherally associated proteins CDK2AP1, CDK2AP2, GATAD2A, GATAD2B, CHD3, CHD4 and CHD5 (PubMed:27806305). The exact stoichiometry of the NuRD complex is unknown, and some subunits such as MBD2 and MBD3, GATAD2A and GATAD2B, and CHD3, CHD4 and CHD5 define mutually exclusive NuRD complexes (PubMed:27806305). Component of a RCOR/GFI/KDM1A/HDAC complex (PubMed:17707228). Component of a BHC histone deacetylase complex that contains HDAC1, HDAC2, HMG20B, KDM1A, RCOR1 and PHF21A (By similarity). The BHC complex may also contain ZMYM2, ZNF217, ZMYM3, GSE1 and GTF2I (By similarity). Part of a complex containing the core histones H2A, H2B, H3 and H4, DEK and unphosphorylated DAXX (By similarity). Part of a complex containing ATR and CHD4 (By similarity). Forms a heterologous complex at least with YY1 (By similarity). Interacts in the late S-phase of DNA-replication with DNMT1 in the other transcriptional repressor complex composed of DNMT1, DMAP1, PCNA, CAF1 (By similarity). Component of a mSin3A corepressor complex that contains SIN3A, SAP130, SUDS3, ARID4B, HDAC1 and HDAC2 (By similarity). Part of a complex composed of TRIM28, HDAC1, HDAC2 and EHMT2 (By similarity). Part of a complex containing at least CDYL, MIER1, MIER2, HDAC1 and HDAC2 (By similarity). Component of a histone deacetylase complex containing DNTTIP1, ZNF541, HDAC1 and HDAC2 (By similarity). Forms a complex comprising APPL1, RUVBL2, APPL2, CTNNB1 and HDAC1 (By similarity). Interacts directly with GFI1 (By similarity). Interacts directly with GFI1B (By similarity). Interacts with APEX1; the interaction is not dependent on the acetylated status of APEX1 (By similarity). Interacts with ATR (By similarity). Interacts with BCL6 (non-acetylated form) (By similarity). Interacts with BEND3 (By similarity). Interacts with CBFA2T3 (PubMed:11533236). Interacts with CDK2AP1 (By similarity). Interacts with CHD4 (PubMed:27806305). Interacts with CHD5 (PubMed:27806305). Interacts with CHFR (By similarity). Interacts with CRY1 (PubMed:15226430). Interacts with DNMT1 (By similarity). Interacts with GATAD2A (By similarity). Interacts with HCFC1 (By similarity). Interacts with HDAC7 (PubMed:10984530). Interacts with HDAC10 (By similarity). Interacts with INSM1 (PubMed:24227653). Interacts with KDM4A (By similarity). Interacts with MACROH2A1 (via the non-histone region) (PubMed:16107708). Interacts with MBD3L2 (By similarity). Interacts with MTA1, with a preference for sumoylated MTA1 (By similarity). Interacts with NACC2 (By similarity). Interacts with NRIP1 (By similarity). Interacts with PELP1 (By similarity). Interacts with PIMREG (By similarity). Interacts with PRDM6 (PubMed:16537907). Interacts with PWWP2B (PubMed:34180153) Interacts with SAP30 (PubMed:9702189). Interacts with SAP30L (By similarity). Interacts with SETDB1 (PubMed:12398767). Interacts with SIX3 (PubMed:17666527). Interacts with SMARCAD1 (By similarity). Interacts with SNW1 (By similarity). Interacts with SPHK2 (By similarity). Interacts with SPEN/MINT (By similarity). Interacts (CK2 phosphorylated form) with SP3 (By similarity). Interacts with SUV39H1 (PubMed:11788710). Interacts with TSHZ3 (via its N-terminus) (By similarity). Interacts with ZMYND8 (By similarity). Interacts with ZNF431 (PubMed:21177534, PubMed:22391310). Interacts with ZNF263; recruited to the SIX3 promoter along with other proteins involved in chromatin modification and transcriptional corepression where it contributes to transcriptional repression (By similarity). Identified in a complex with HDAC1, KCTD19, DNTTIP1 and ZNF541 (PubMed:34075040, PubMed:35341968). Component of the SIN3B complex, which includes SIN3B, HDAC2, PHF12 and MORF4L1; interacts directly with all subunits (By similarity).</text>
</comment>
<comment type="interaction">
    <interactant intactId="EBI-302251">
        <id>P70288</id>
    </interactant>
    <interactant intactId="EBI-1216284">
        <id>Q6ZQ88</id>
        <label>Kdm1a</label>
    </interactant>
    <organismsDiffer>false</organismsDiffer>
    <experiments>4</experiments>
</comment>
<comment type="interaction">
    <interactant intactId="EBI-302251">
        <id>P70288</id>
    </interactant>
    <interactant intactId="EBI-904134">
        <id>Q9R190</id>
        <label>Mta2</label>
    </interactant>
    <organismsDiffer>false</organismsDiffer>
    <experiments>7</experiments>
</comment>
<comment type="interaction">
    <interactant intactId="EBI-302251">
        <id>P70288</id>
    </interactant>
    <interactant intactId="EBI-642213">
        <id>P11103</id>
        <label>Parp1</label>
    </interactant>
    <organismsDiffer>false</organismsDiffer>
    <experiments>3</experiments>
</comment>
<comment type="interaction">
    <interactant intactId="EBI-302251">
        <id>P70288</id>
    </interactant>
    <interactant intactId="EBI-3043949">
        <id>Q8C796</id>
        <label>Rcor2</label>
    </interactant>
    <organismsDiffer>false</organismsDiffer>
    <experiments>2</experiments>
</comment>
<comment type="interaction">
    <interactant intactId="EBI-302251">
        <id>P70288</id>
    </interactant>
    <interactant intactId="EBI-349034">
        <id>Q60520</id>
        <label>Sin3a</label>
    </interactant>
    <organismsDiffer>false</organismsDiffer>
    <experiments>7</experiments>
</comment>
<comment type="interaction">
    <interactant intactId="EBI-302251">
        <id>P70288</id>
    </interactant>
    <interactant intactId="EBI-2297327">
        <id>Q62233</id>
        <label>Six3</label>
    </interactant>
    <organismsDiffer>false</organismsDiffer>
    <experiments>2</experiments>
</comment>
<comment type="interaction">
    <interactant intactId="EBI-302251">
        <id>P70288</id>
    </interactant>
    <interactant intactId="EBI-1210244">
        <id>Q3TKT4</id>
        <label>Smarca4</label>
    </interactant>
    <organismsDiffer>false</organismsDiffer>
    <experiments>4</experiments>
</comment>
<comment type="interaction">
    <interactant intactId="EBI-302251">
        <id>P70288</id>
    </interactant>
    <interactant intactId="EBI-9549639">
        <id>E9QAG8</id>
        <label>Znf431</label>
    </interactant>
    <organismsDiffer>false</organismsDiffer>
    <experiments>3</experiments>
</comment>
<comment type="subcellular location">
    <subcellularLocation>
        <location evidence="3">Nucleus</location>
    </subcellularLocation>
    <subcellularLocation>
        <location evidence="3">Cytoplasm</location>
    </subcellularLocation>
</comment>
<comment type="PTM">
    <text evidence="14 16 17">S-nitrosylated by GAPDH. In neurons, S-nitrosylation at Cys-262 and Cys-274 does not affect enzyme activity, but induces HDAC2 release from chromatin. This in turn increases acetylation of histones surrounding neurotrophin-dependent gene promoters and promotes their transcription. In embryonic cortical neurons, S-Nitrosylation regulates dendritic growth and branching.</text>
</comment>
<comment type="similarity">
    <text evidence="27">Belongs to the histone deacetylase family. HD type 1 subfamily.</text>
</comment>
<comment type="caution">
    <text evidence="14 16 17 28">Was originally thought to be S-nitrosylated and to interact with MTA1 (PubMed:20519513). However, this work was later retracted (PubMed:28314777). Nevertheless, other publications demonstrate that it is S-nitrosylated and there are several publications in the human ortholog demonstrating its interaction with MTA1 (PubMed:18754010, PubMed:20972425).</text>
</comment>
<dbReference type="EC" id="3.5.1.98" evidence="14 29"/>
<dbReference type="EC" id="3.5.1.-" evidence="22"/>
<dbReference type="EMBL" id="U31758">
    <property type="protein sequence ID" value="AAC52889.1"/>
    <property type="molecule type" value="mRNA"/>
</dbReference>
<dbReference type="EMBL" id="CH466540">
    <property type="protein sequence ID" value="EDL04897.1"/>
    <property type="molecule type" value="Genomic_DNA"/>
</dbReference>
<dbReference type="EMBL" id="BC138517">
    <property type="protein sequence ID" value="AAI38518.1"/>
    <property type="molecule type" value="mRNA"/>
</dbReference>
<dbReference type="CCDS" id="CCDS23783.1"/>
<dbReference type="RefSeq" id="NP_032255.2">
    <property type="nucleotide sequence ID" value="NM_008229.2"/>
</dbReference>
<dbReference type="SMR" id="P70288"/>
<dbReference type="BioGRID" id="200260">
    <property type="interactions" value="68"/>
</dbReference>
<dbReference type="ComplexPortal" id="CPX-3441">
    <property type="entry name" value="SIN3A histone deacetylase complex, ES cell-specific variant"/>
</dbReference>
<dbReference type="ComplexPortal" id="CPX-3443">
    <property type="entry name" value="SIN3A histone deacetylase complex"/>
</dbReference>
<dbReference type="ComplexPortal" id="CPX-3444">
    <property type="entry name" value="SIN3B histone deacetylase complex"/>
</dbReference>
<dbReference type="ComplexPortal" id="CPX-953">
    <property type="entry name" value="MBD2/NuRD nucleosome remodeling and deacetylase complex"/>
</dbReference>
<dbReference type="ComplexPortal" id="CPX-954">
    <property type="entry name" value="MBD3/NuRD nucleosome remodeling and deacetylase complex"/>
</dbReference>
<dbReference type="CORUM" id="P70288"/>
<dbReference type="DIP" id="DIP-32854N"/>
<dbReference type="FunCoup" id="P70288">
    <property type="interactions" value="3815"/>
</dbReference>
<dbReference type="IntAct" id="P70288">
    <property type="interactions" value="42"/>
</dbReference>
<dbReference type="MINT" id="P70288"/>
<dbReference type="STRING" id="10090.ENSMUSP00000019911"/>
<dbReference type="BindingDB" id="P70288"/>
<dbReference type="ChEMBL" id="CHEMBL4238"/>
<dbReference type="GlyGen" id="P70288">
    <property type="glycosylation" value="1 site, 1 O-linked glycan (1 site)"/>
</dbReference>
<dbReference type="iPTMnet" id="P70288"/>
<dbReference type="PhosphoSitePlus" id="P70288"/>
<dbReference type="jPOST" id="P70288"/>
<dbReference type="PaxDb" id="10090-ENSMUSP00000019911"/>
<dbReference type="PeptideAtlas" id="P70288"/>
<dbReference type="ProteomicsDB" id="269728"/>
<dbReference type="Pumba" id="P70288"/>
<dbReference type="DNASU" id="15182"/>
<dbReference type="GeneID" id="15182"/>
<dbReference type="KEGG" id="mmu:15182"/>
<dbReference type="UCSC" id="uc007evf.1">
    <property type="organism name" value="mouse"/>
</dbReference>
<dbReference type="AGR" id="MGI:1097691"/>
<dbReference type="CTD" id="3066"/>
<dbReference type="MGI" id="MGI:1097691">
    <property type="gene designation" value="Hdac2"/>
</dbReference>
<dbReference type="eggNOG" id="KOG1342">
    <property type="taxonomic scope" value="Eukaryota"/>
</dbReference>
<dbReference type="InParanoid" id="P70288"/>
<dbReference type="OrthoDB" id="1918432at2759"/>
<dbReference type="PhylomeDB" id="P70288"/>
<dbReference type="TreeFam" id="TF106171"/>
<dbReference type="BRENDA" id="3.5.1.98">
    <property type="organism ID" value="3474"/>
</dbReference>
<dbReference type="Reactome" id="R-MMU-3214815">
    <property type="pathway name" value="HDACs deacetylate histones"/>
</dbReference>
<dbReference type="Reactome" id="R-MMU-350054">
    <property type="pathway name" value="Notch-HLH transcription pathway"/>
</dbReference>
<dbReference type="Reactome" id="R-MMU-4551638">
    <property type="pathway name" value="SUMOylation of chromatin organization proteins"/>
</dbReference>
<dbReference type="Reactome" id="R-MMU-6804758">
    <property type="pathway name" value="Regulation of TP53 Activity through Acetylation"/>
</dbReference>
<dbReference type="Reactome" id="R-MMU-73762">
    <property type="pathway name" value="RNA Polymerase I Transcription Initiation"/>
</dbReference>
<dbReference type="Reactome" id="R-MMU-8943724">
    <property type="pathway name" value="Regulation of PTEN gene transcription"/>
</dbReference>
<dbReference type="Reactome" id="R-MMU-9022692">
    <property type="pathway name" value="Regulation of MECP2 expression and activity"/>
</dbReference>
<dbReference type="Reactome" id="R-MMU-9701898">
    <property type="pathway name" value="STAT3 nuclear events downstream of ALK signaling"/>
</dbReference>
<dbReference type="Reactome" id="R-MMU-983231">
    <property type="pathway name" value="Factors involved in megakaryocyte development and platelet production"/>
</dbReference>
<dbReference type="BioGRID-ORCS" id="15182">
    <property type="hits" value="5 hits in 85 CRISPR screens"/>
</dbReference>
<dbReference type="ChiTaRS" id="Hdac2">
    <property type="organism name" value="mouse"/>
</dbReference>
<dbReference type="PRO" id="PR:P70288"/>
<dbReference type="Proteomes" id="UP000000589">
    <property type="component" value="Unplaced"/>
</dbReference>
<dbReference type="RNAct" id="P70288">
    <property type="molecule type" value="protein"/>
</dbReference>
<dbReference type="GO" id="GO:0000785">
    <property type="term" value="C:chromatin"/>
    <property type="evidence" value="ECO:0000314"/>
    <property type="project" value="BHF-UCL"/>
</dbReference>
<dbReference type="GO" id="GO:0005737">
    <property type="term" value="C:cytoplasm"/>
    <property type="evidence" value="ECO:0000304"/>
    <property type="project" value="UniProtKB"/>
</dbReference>
<dbReference type="GO" id="GO:0035098">
    <property type="term" value="C:ESC/E(Z) complex"/>
    <property type="evidence" value="ECO:0000250"/>
    <property type="project" value="UniProtKB"/>
</dbReference>
<dbReference type="GO" id="GO:0000792">
    <property type="term" value="C:heterochromatin"/>
    <property type="evidence" value="ECO:0000314"/>
    <property type="project" value="MGI"/>
</dbReference>
<dbReference type="GO" id="GO:0000118">
    <property type="term" value="C:histone deacetylase complex"/>
    <property type="evidence" value="ECO:0000304"/>
    <property type="project" value="UniProtKB"/>
</dbReference>
<dbReference type="GO" id="GO:0005654">
    <property type="term" value="C:nucleoplasm"/>
    <property type="evidence" value="ECO:0000304"/>
    <property type="project" value="Reactome"/>
</dbReference>
<dbReference type="GO" id="GO:0005634">
    <property type="term" value="C:nucleus"/>
    <property type="evidence" value="ECO:0000314"/>
    <property type="project" value="UniProtKB"/>
</dbReference>
<dbReference type="GO" id="GO:0016581">
    <property type="term" value="C:NuRD complex"/>
    <property type="evidence" value="ECO:0000250"/>
    <property type="project" value="UniProtKB"/>
</dbReference>
<dbReference type="GO" id="GO:0005657">
    <property type="term" value="C:replication fork"/>
    <property type="evidence" value="ECO:0000314"/>
    <property type="project" value="MGI"/>
</dbReference>
<dbReference type="GO" id="GO:0090571">
    <property type="term" value="C:RNA polymerase II transcription repressor complex"/>
    <property type="evidence" value="ECO:0000314"/>
    <property type="project" value="BHF-UCL"/>
</dbReference>
<dbReference type="GO" id="GO:0070822">
    <property type="term" value="C:Sin3-type complex"/>
    <property type="evidence" value="ECO:0000303"/>
    <property type="project" value="ComplexPortal"/>
</dbReference>
<dbReference type="GO" id="GO:0005667">
    <property type="term" value="C:transcription regulator complex"/>
    <property type="evidence" value="ECO:0000353"/>
    <property type="project" value="MGI"/>
</dbReference>
<dbReference type="GO" id="GO:0017053">
    <property type="term" value="C:transcription repressor complex"/>
    <property type="evidence" value="ECO:0000353"/>
    <property type="project" value="MGI"/>
</dbReference>
<dbReference type="GO" id="GO:0003682">
    <property type="term" value="F:chromatin binding"/>
    <property type="evidence" value="ECO:0000314"/>
    <property type="project" value="UniProtKB"/>
</dbReference>
<dbReference type="GO" id="GO:0031490">
    <property type="term" value="F:chromatin DNA binding"/>
    <property type="evidence" value="ECO:0000314"/>
    <property type="project" value="MGI"/>
</dbReference>
<dbReference type="GO" id="GO:0140297">
    <property type="term" value="F:DNA-binding transcription factor binding"/>
    <property type="evidence" value="ECO:0000353"/>
    <property type="project" value="UniProtKB"/>
</dbReference>
<dbReference type="GO" id="GO:0019899">
    <property type="term" value="F:enzyme binding"/>
    <property type="evidence" value="ECO:0000353"/>
    <property type="project" value="UniProtKB"/>
</dbReference>
<dbReference type="GO" id="GO:0004407">
    <property type="term" value="F:histone deacetylase activity"/>
    <property type="evidence" value="ECO:0000314"/>
    <property type="project" value="UniProtKB"/>
</dbReference>
<dbReference type="GO" id="GO:0160009">
    <property type="term" value="F:histone decrotonylase activity"/>
    <property type="evidence" value="ECO:0000314"/>
    <property type="project" value="UniProtKB"/>
</dbReference>
<dbReference type="GO" id="GO:0034739">
    <property type="term" value="F:histone H4K16 deacetylase activity, hydrolytic mechanism"/>
    <property type="evidence" value="ECO:0000315"/>
    <property type="project" value="CACAO"/>
</dbReference>
<dbReference type="GO" id="GO:0035851">
    <property type="term" value="F:Krueppel-associated box domain binding"/>
    <property type="evidence" value="ECO:0000353"/>
    <property type="project" value="UniProtKB"/>
</dbReference>
<dbReference type="GO" id="GO:0046872">
    <property type="term" value="F:metal ion binding"/>
    <property type="evidence" value="ECO:0007669"/>
    <property type="project" value="UniProtKB-KW"/>
</dbReference>
<dbReference type="GO" id="GO:0160010">
    <property type="term" value="F:protein de-2-hydroxyisobutyrylase activity"/>
    <property type="evidence" value="ECO:0000250"/>
    <property type="project" value="UniProtKB"/>
</dbReference>
<dbReference type="GO" id="GO:0033558">
    <property type="term" value="F:protein lysine deacetylase activity"/>
    <property type="evidence" value="ECO:0000314"/>
    <property type="project" value="BHF-UCL"/>
</dbReference>
<dbReference type="GO" id="GO:0160216">
    <property type="term" value="F:protein lysine delactylase activity"/>
    <property type="evidence" value="ECO:0000250"/>
    <property type="project" value="UniProtKB"/>
</dbReference>
<dbReference type="GO" id="GO:0000978">
    <property type="term" value="F:RNA polymerase II cis-regulatory region sequence-specific DNA binding"/>
    <property type="evidence" value="ECO:0000314"/>
    <property type="project" value="UniProtKB"/>
</dbReference>
<dbReference type="GO" id="GO:0001222">
    <property type="term" value="F:transcription corepressor binding"/>
    <property type="evidence" value="ECO:0000353"/>
    <property type="project" value="BHF-UCL"/>
</dbReference>
<dbReference type="GO" id="GO:0055013">
    <property type="term" value="P:cardiac muscle cell development"/>
    <property type="evidence" value="ECO:0000315"/>
    <property type="project" value="MGI"/>
</dbReference>
<dbReference type="GO" id="GO:0060038">
    <property type="term" value="P:cardiac muscle cell proliferation"/>
    <property type="evidence" value="ECO:0000315"/>
    <property type="project" value="MGI"/>
</dbReference>
<dbReference type="GO" id="GO:0035984">
    <property type="term" value="P:cellular response to trichostatin A"/>
    <property type="evidence" value="ECO:0000314"/>
    <property type="project" value="MGI"/>
</dbReference>
<dbReference type="GO" id="GO:0006325">
    <property type="term" value="P:chromatin organization"/>
    <property type="evidence" value="ECO:0000304"/>
    <property type="project" value="UniProtKB"/>
</dbReference>
<dbReference type="GO" id="GO:0006338">
    <property type="term" value="P:chromatin remodeling"/>
    <property type="evidence" value="ECO:0000266"/>
    <property type="project" value="ComplexPortal"/>
</dbReference>
<dbReference type="GO" id="GO:0032922">
    <property type="term" value="P:circadian regulation of gene expression"/>
    <property type="evidence" value="ECO:0000314"/>
    <property type="project" value="UniProtKB"/>
</dbReference>
<dbReference type="GO" id="GO:0016358">
    <property type="term" value="P:dendrite development"/>
    <property type="evidence" value="ECO:0000315"/>
    <property type="project" value="UniProtKB"/>
</dbReference>
<dbReference type="GO" id="GO:0042733">
    <property type="term" value="P:embryonic digit morphogenesis"/>
    <property type="evidence" value="ECO:0000316"/>
    <property type="project" value="BHF-UCL"/>
</dbReference>
<dbReference type="GO" id="GO:0009913">
    <property type="term" value="P:epidermal cell differentiation"/>
    <property type="evidence" value="ECO:0000316"/>
    <property type="project" value="BHF-UCL"/>
</dbReference>
<dbReference type="GO" id="GO:0061029">
    <property type="term" value="P:eyelid development in camera-type eye"/>
    <property type="evidence" value="ECO:0000316"/>
    <property type="project" value="BHF-UCL"/>
</dbReference>
<dbReference type="GO" id="GO:0061198">
    <property type="term" value="P:fungiform papilla formation"/>
    <property type="evidence" value="ECO:0000316"/>
    <property type="project" value="BHF-UCL"/>
</dbReference>
<dbReference type="GO" id="GO:0060789">
    <property type="term" value="P:hair follicle placode formation"/>
    <property type="evidence" value="ECO:0000316"/>
    <property type="project" value="BHF-UCL"/>
</dbReference>
<dbReference type="GO" id="GO:0021766">
    <property type="term" value="P:hippocampus development"/>
    <property type="evidence" value="ECO:0000316"/>
    <property type="project" value="MGI"/>
</dbReference>
<dbReference type="GO" id="GO:0043066">
    <property type="term" value="P:negative regulation of apoptotic process"/>
    <property type="evidence" value="ECO:0000316"/>
    <property type="project" value="BHF-UCL"/>
</dbReference>
<dbReference type="GO" id="GO:0090090">
    <property type="term" value="P:negative regulation of canonical Wnt signaling pathway"/>
    <property type="evidence" value="ECO:0000316"/>
    <property type="project" value="MGI"/>
</dbReference>
<dbReference type="GO" id="GO:0060044">
    <property type="term" value="P:negative regulation of cardiac muscle cell proliferation"/>
    <property type="evidence" value="ECO:0000315"/>
    <property type="project" value="MGI"/>
</dbReference>
<dbReference type="GO" id="GO:0030336">
    <property type="term" value="P:negative regulation of cell migration"/>
    <property type="evidence" value="ECO:0000303"/>
    <property type="project" value="ComplexPortal"/>
</dbReference>
<dbReference type="GO" id="GO:0045892">
    <property type="term" value="P:negative regulation of DNA-templated transcription"/>
    <property type="evidence" value="ECO:0000314"/>
    <property type="project" value="BHF-UCL"/>
</dbReference>
<dbReference type="GO" id="GO:2001243">
    <property type="term" value="P:negative regulation of intrinsic apoptotic signaling pathway"/>
    <property type="evidence" value="ECO:0000316"/>
    <property type="project" value="MGI"/>
</dbReference>
<dbReference type="GO" id="GO:1902894">
    <property type="term" value="P:negative regulation of miRNA transcription"/>
    <property type="evidence" value="ECO:0000315"/>
    <property type="project" value="BHF-UCL"/>
</dbReference>
<dbReference type="GO" id="GO:0010977">
    <property type="term" value="P:negative regulation of neuron projection development"/>
    <property type="evidence" value="ECO:0000314"/>
    <property type="project" value="BHF-UCL"/>
</dbReference>
<dbReference type="GO" id="GO:1902455">
    <property type="term" value="P:negative regulation of stem cell population maintenance"/>
    <property type="evidence" value="ECO:0000303"/>
    <property type="project" value="ComplexPortal"/>
</dbReference>
<dbReference type="GO" id="GO:0000122">
    <property type="term" value="P:negative regulation of transcription by RNA polymerase II"/>
    <property type="evidence" value="ECO:0000316"/>
    <property type="project" value="BHF-UCL"/>
</dbReference>
<dbReference type="GO" id="GO:0030512">
    <property type="term" value="P:negative regulation of transforming growth factor beta receptor signaling pathway"/>
    <property type="evidence" value="ECO:0000303"/>
    <property type="project" value="ComplexPortal"/>
</dbReference>
<dbReference type="GO" id="GO:0030182">
    <property type="term" value="P:neuron differentiation"/>
    <property type="evidence" value="ECO:0000316"/>
    <property type="project" value="MGI"/>
</dbReference>
<dbReference type="GO" id="GO:0042475">
    <property type="term" value="P:odontogenesis of dentin-containing tooth"/>
    <property type="evidence" value="ECO:0000316"/>
    <property type="project" value="BHF-UCL"/>
</dbReference>
<dbReference type="GO" id="GO:0048709">
    <property type="term" value="P:oligodendrocyte differentiation"/>
    <property type="evidence" value="ECO:0000316"/>
    <property type="project" value="MGI"/>
</dbReference>
<dbReference type="GO" id="GO:0008284">
    <property type="term" value="P:positive regulation of cell population proliferation"/>
    <property type="evidence" value="ECO:0000316"/>
    <property type="project" value="BHF-UCL"/>
</dbReference>
<dbReference type="GO" id="GO:0045893">
    <property type="term" value="P:positive regulation of DNA-templated transcription"/>
    <property type="evidence" value="ECO:0000303"/>
    <property type="project" value="ComplexPortal"/>
</dbReference>
<dbReference type="GO" id="GO:0048714">
    <property type="term" value="P:positive regulation of oligodendrocyte differentiation"/>
    <property type="evidence" value="ECO:0000316"/>
    <property type="project" value="MGI"/>
</dbReference>
<dbReference type="GO" id="GO:1902459">
    <property type="term" value="P:positive regulation of stem cell population maintenance"/>
    <property type="evidence" value="ECO:0000303"/>
    <property type="project" value="ComplexPortal"/>
</dbReference>
<dbReference type="GO" id="GO:0006476">
    <property type="term" value="P:protein deacetylation"/>
    <property type="evidence" value="ECO:0000314"/>
    <property type="project" value="BHF-UCL"/>
</dbReference>
<dbReference type="GO" id="GO:0042659">
    <property type="term" value="P:regulation of cell fate specification"/>
    <property type="evidence" value="ECO:0000303"/>
    <property type="project" value="ComplexPortal"/>
</dbReference>
<dbReference type="GO" id="GO:0051896">
    <property type="term" value="P:regulation of phosphatidylinositol 3-kinase/protein kinase B signal transduction"/>
    <property type="evidence" value="ECO:0000315"/>
    <property type="project" value="MGI"/>
</dbReference>
<dbReference type="GO" id="GO:0060297">
    <property type="term" value="P:regulation of sarcomere organization"/>
    <property type="evidence" value="ECO:0000315"/>
    <property type="project" value="MGI"/>
</dbReference>
<dbReference type="GO" id="GO:2000736">
    <property type="term" value="P:regulation of stem cell differentiation"/>
    <property type="evidence" value="ECO:0000303"/>
    <property type="project" value="ComplexPortal"/>
</dbReference>
<dbReference type="CDD" id="cd10011">
    <property type="entry name" value="HDAC2"/>
    <property type="match status" value="1"/>
</dbReference>
<dbReference type="FunFam" id="3.40.800.20:FF:000003">
    <property type="entry name" value="Histone deacetylase"/>
    <property type="match status" value="1"/>
</dbReference>
<dbReference type="Gene3D" id="3.40.800.20">
    <property type="entry name" value="Histone deacetylase domain"/>
    <property type="match status" value="1"/>
</dbReference>
<dbReference type="InterPro" id="IPR050284">
    <property type="entry name" value="HDAC_PDAC"/>
</dbReference>
<dbReference type="InterPro" id="IPR000286">
    <property type="entry name" value="His_deacetylse"/>
</dbReference>
<dbReference type="InterPro" id="IPR003084">
    <property type="entry name" value="His_deacetylse_1"/>
</dbReference>
<dbReference type="InterPro" id="IPR023801">
    <property type="entry name" value="His_deacetylse_dom"/>
</dbReference>
<dbReference type="InterPro" id="IPR037138">
    <property type="entry name" value="His_deacetylse_dom_sf"/>
</dbReference>
<dbReference type="InterPro" id="IPR023696">
    <property type="entry name" value="Ureohydrolase_dom_sf"/>
</dbReference>
<dbReference type="PANTHER" id="PTHR10625:SF3">
    <property type="entry name" value="HISTONE DEACETYLASE 2"/>
    <property type="match status" value="1"/>
</dbReference>
<dbReference type="PANTHER" id="PTHR10625">
    <property type="entry name" value="HISTONE DEACETYLASE HDAC1-RELATED"/>
    <property type="match status" value="1"/>
</dbReference>
<dbReference type="Pfam" id="PF00850">
    <property type="entry name" value="Hist_deacetyl"/>
    <property type="match status" value="1"/>
</dbReference>
<dbReference type="PIRSF" id="PIRSF037913">
    <property type="entry name" value="His_deacetylse_1"/>
    <property type="match status" value="1"/>
</dbReference>
<dbReference type="PRINTS" id="PR01270">
    <property type="entry name" value="HDASUPER"/>
</dbReference>
<dbReference type="PRINTS" id="PR01271">
    <property type="entry name" value="HISDACETLASE"/>
</dbReference>
<dbReference type="SUPFAM" id="SSF52768">
    <property type="entry name" value="Arginase/deacetylase"/>
    <property type="match status" value="1"/>
</dbReference>